<dbReference type="EMBL" id="CH408161">
    <property type="protein sequence ID" value="EDK41361.2"/>
    <property type="molecule type" value="Genomic_DNA"/>
</dbReference>
<dbReference type="RefSeq" id="XP_001482439.1">
    <property type="nucleotide sequence ID" value="XM_001482389.1"/>
</dbReference>
<dbReference type="SMR" id="A5DQA8"/>
<dbReference type="FunCoup" id="A5DQA8">
    <property type="interactions" value="38"/>
</dbReference>
<dbReference type="STRING" id="294746.A5DQA8"/>
<dbReference type="GeneID" id="5124188"/>
<dbReference type="KEGG" id="pgu:PGUG_05459"/>
<dbReference type="VEuPathDB" id="FungiDB:PGUG_05459"/>
<dbReference type="eggNOG" id="KOG4573">
    <property type="taxonomic scope" value="Eukaryota"/>
</dbReference>
<dbReference type="HOGENOM" id="CLU_366802_0_0_1"/>
<dbReference type="InParanoid" id="A5DQA8"/>
<dbReference type="OMA" id="FHQVGPT"/>
<dbReference type="OrthoDB" id="70161at2759"/>
<dbReference type="Proteomes" id="UP000001997">
    <property type="component" value="Unassembled WGS sequence"/>
</dbReference>
<dbReference type="GO" id="GO:1990316">
    <property type="term" value="C:Atg1/ULK1 kinase complex"/>
    <property type="evidence" value="ECO:0007669"/>
    <property type="project" value="InterPro"/>
</dbReference>
<dbReference type="GO" id="GO:0005829">
    <property type="term" value="C:cytosol"/>
    <property type="evidence" value="ECO:0007669"/>
    <property type="project" value="TreeGrafter"/>
</dbReference>
<dbReference type="GO" id="GO:0000407">
    <property type="term" value="C:phagophore assembly site"/>
    <property type="evidence" value="ECO:0007669"/>
    <property type="project" value="UniProtKB-SubCell"/>
</dbReference>
<dbReference type="GO" id="GO:0000423">
    <property type="term" value="P:mitophagy"/>
    <property type="evidence" value="ECO:0007669"/>
    <property type="project" value="TreeGrafter"/>
</dbReference>
<dbReference type="GO" id="GO:0034727">
    <property type="term" value="P:piecemeal microautophagy of the nucleus"/>
    <property type="evidence" value="ECO:0007669"/>
    <property type="project" value="TreeGrafter"/>
</dbReference>
<dbReference type="GO" id="GO:0034497">
    <property type="term" value="P:protein localization to phagophore assembly site"/>
    <property type="evidence" value="ECO:0007669"/>
    <property type="project" value="TreeGrafter"/>
</dbReference>
<dbReference type="GO" id="GO:0015031">
    <property type="term" value="P:protein transport"/>
    <property type="evidence" value="ECO:0007669"/>
    <property type="project" value="UniProtKB-KW"/>
</dbReference>
<dbReference type="Gene3D" id="6.10.140.1900">
    <property type="match status" value="1"/>
</dbReference>
<dbReference type="Gene3D" id="3.30.900.10">
    <property type="entry name" value="HORMA domain"/>
    <property type="match status" value="1"/>
</dbReference>
<dbReference type="InterPro" id="IPR040182">
    <property type="entry name" value="ATG13"/>
</dbReference>
<dbReference type="InterPro" id="IPR018731">
    <property type="entry name" value="Atg13_N"/>
</dbReference>
<dbReference type="InterPro" id="IPR036570">
    <property type="entry name" value="HORMA_dom_sf"/>
</dbReference>
<dbReference type="PANTHER" id="PTHR13430">
    <property type="match status" value="1"/>
</dbReference>
<dbReference type="PANTHER" id="PTHR13430:SF4">
    <property type="entry name" value="AUTOPHAGY-RELATED PROTEIN 13"/>
    <property type="match status" value="1"/>
</dbReference>
<dbReference type="Pfam" id="PF10033">
    <property type="entry name" value="ATG13"/>
    <property type="match status" value="1"/>
</dbReference>
<proteinExistence type="inferred from homology"/>
<protein>
    <recommendedName>
        <fullName>Autophagy-related protein 13</fullName>
    </recommendedName>
</protein>
<reference key="1">
    <citation type="journal article" date="2009" name="Nature">
        <title>Evolution of pathogenicity and sexual reproduction in eight Candida genomes.</title>
        <authorList>
            <person name="Butler G."/>
            <person name="Rasmussen M.D."/>
            <person name="Lin M.F."/>
            <person name="Santos M.A.S."/>
            <person name="Sakthikumar S."/>
            <person name="Munro C.A."/>
            <person name="Rheinbay E."/>
            <person name="Grabherr M."/>
            <person name="Forche A."/>
            <person name="Reedy J.L."/>
            <person name="Agrafioti I."/>
            <person name="Arnaud M.B."/>
            <person name="Bates S."/>
            <person name="Brown A.J.P."/>
            <person name="Brunke S."/>
            <person name="Costanzo M.C."/>
            <person name="Fitzpatrick D.A."/>
            <person name="de Groot P.W.J."/>
            <person name="Harris D."/>
            <person name="Hoyer L.L."/>
            <person name="Hube B."/>
            <person name="Klis F.M."/>
            <person name="Kodira C."/>
            <person name="Lennard N."/>
            <person name="Logue M.E."/>
            <person name="Martin R."/>
            <person name="Neiman A.M."/>
            <person name="Nikolaou E."/>
            <person name="Quail M.A."/>
            <person name="Quinn J."/>
            <person name="Santos M.C."/>
            <person name="Schmitzberger F.F."/>
            <person name="Sherlock G."/>
            <person name="Shah P."/>
            <person name="Silverstein K.A.T."/>
            <person name="Skrzypek M.S."/>
            <person name="Soll D."/>
            <person name="Staggs R."/>
            <person name="Stansfield I."/>
            <person name="Stumpf M.P.H."/>
            <person name="Sudbery P.E."/>
            <person name="Srikantha T."/>
            <person name="Zeng Q."/>
            <person name="Berman J."/>
            <person name="Berriman M."/>
            <person name="Heitman J."/>
            <person name="Gow N.A.R."/>
            <person name="Lorenz M.C."/>
            <person name="Birren B.W."/>
            <person name="Kellis M."/>
            <person name="Cuomo C.A."/>
        </authorList>
    </citation>
    <scope>NUCLEOTIDE SEQUENCE [LARGE SCALE GENOMIC DNA]</scope>
    <source>
        <strain>ATCC 6260 / CBS 566 / DSM 6381 / JCM 1539 / NBRC 10279 / NRRL Y-324</strain>
    </source>
</reference>
<feature type="chain" id="PRO_0000317950" description="Autophagy-related protein 13">
    <location>
        <begin position="1"/>
        <end position="669"/>
    </location>
</feature>
<feature type="region of interest" description="Disordered" evidence="3">
    <location>
        <begin position="239"/>
        <end position="288"/>
    </location>
</feature>
<feature type="region of interest" description="Disordered" evidence="3">
    <location>
        <begin position="305"/>
        <end position="354"/>
    </location>
</feature>
<feature type="region of interest" description="Disordered" evidence="3">
    <location>
        <begin position="406"/>
        <end position="458"/>
    </location>
</feature>
<feature type="region of interest" description="Disordered" evidence="3">
    <location>
        <begin position="530"/>
        <end position="581"/>
    </location>
</feature>
<feature type="compositionally biased region" description="Low complexity" evidence="3">
    <location>
        <begin position="423"/>
        <end position="437"/>
    </location>
</feature>
<feature type="compositionally biased region" description="Polar residues" evidence="3">
    <location>
        <begin position="438"/>
        <end position="458"/>
    </location>
</feature>
<feature type="compositionally biased region" description="Pro residues" evidence="3">
    <location>
        <begin position="559"/>
        <end position="571"/>
    </location>
</feature>
<comment type="function">
    <text evidence="1">Activates the ATG1 kinase in a nutritional condition dependent manner through the TOR pathway, leading to autophagy. Also involved in cytoplasm to vacuole transport (Cvt) and more specifically in Cvt vesicle formation. Seems to play a role in the switching machinery regulating the conversion between the Cvt pathway and autophagy. Finally, ATG13 is also required for glycogen storage during stationary phase (By similarity).</text>
</comment>
<comment type="subunit">
    <text evidence="1">Interacts with ATG1 to form the ATG1-ATG13 kinase complex.</text>
</comment>
<comment type="subcellular location">
    <subcellularLocation>
        <location evidence="2">Cytoplasm</location>
    </subcellularLocation>
    <subcellularLocation>
        <location evidence="2">Preautophagosomal structure</location>
    </subcellularLocation>
</comment>
<comment type="similarity">
    <text evidence="4">Belongs to the ATG13 family. Fungi subfamily.</text>
</comment>
<organism>
    <name type="scientific">Meyerozyma guilliermondii (strain ATCC 6260 / CBS 566 / DSM 6381 / JCM 1539 / NBRC 10279 / NRRL Y-324)</name>
    <name type="common">Yeast</name>
    <name type="synonym">Candida guilliermondii</name>
    <dbReference type="NCBI Taxonomy" id="294746"/>
    <lineage>
        <taxon>Eukaryota</taxon>
        <taxon>Fungi</taxon>
        <taxon>Dikarya</taxon>
        <taxon>Ascomycota</taxon>
        <taxon>Saccharomycotina</taxon>
        <taxon>Pichiomycetes</taxon>
        <taxon>Debaryomycetaceae</taxon>
        <taxon>Meyerozyma</taxon>
    </lineage>
</organism>
<sequence length="669" mass="74106">MEKPKQKLTQVTVNFFLKTSQMILQARSLDEHGKGKLNKWFNLHTFNSDDLRSELRLWRSTIDLTAVPPMIVETYLDLGNLPQGHTLALKDEHGNLWPVTKGGSKKTEVVLERWLVEFDPNEFGTIEELPYIYKQAIILCRSIYTIIRIMPAASLRNQSPHYVLANKIVDGSKPISSKGRIGLSKTIIPHQMLTDTHVRHRTFSPIETSLGTLKVSVAYRSHCEFTELAEWDHRELGREKEPREDLRQVESKGEEDHSIESIPYEEKAYKTDEEKSDKTPEHVQYKPFKPEFKQLEAVKLEGSDFKSELHEGTSPLSLSGSPSSPPRDDKKRPSIQPFRVGSIGNSPPPASSSLERRISITSNKSTSNASLAAVLRNPRSSFSIPIAGSIGTGAPVTGGFPRSVSSSHGYGYEDSDSAANTPRFSSSFGSRASRRFSNTSVRHGSLHDTTSPLGTSAGSATSIPLSGLYIDDDISDFVRMIDSKQDLRFGHDSGGSGSQSGSQYEVLNRFHQLKSQHQQLGDSVNASVMMHRKSSSPPGSYESHVPSIHSRLRESSEPHPAPATAPAPGPLIKPASKMMSSPVISTTSAHAMSQTASATTRDEIVGLATTPSTYRKHLHYENVFDDDDEDEDHHGYFKAKARSKSLSRSHFDDDDDLLFTMSDTNLAKH</sequence>
<evidence type="ECO:0000250" key="1"/>
<evidence type="ECO:0000250" key="2">
    <source>
        <dbReference type="UniProtKB" id="Q06628"/>
    </source>
</evidence>
<evidence type="ECO:0000256" key="3">
    <source>
        <dbReference type="SAM" id="MobiDB-lite"/>
    </source>
</evidence>
<evidence type="ECO:0000305" key="4"/>
<gene>
    <name type="primary">ATG13</name>
    <name type="ORF">PGUG_05459</name>
</gene>
<accession>A5DQA8</accession>
<keyword id="KW-0072">Autophagy</keyword>
<keyword id="KW-0963">Cytoplasm</keyword>
<keyword id="KW-0653">Protein transport</keyword>
<keyword id="KW-1185">Reference proteome</keyword>
<keyword id="KW-0813">Transport</keyword>
<name>ATG13_PICGU</name>